<reference key="1">
    <citation type="journal article" date="2002" name="Nature">
        <title>Genome sequence of the plant pathogen Ralstonia solanacearum.</title>
        <authorList>
            <person name="Salanoubat M."/>
            <person name="Genin S."/>
            <person name="Artiguenave F."/>
            <person name="Gouzy J."/>
            <person name="Mangenot S."/>
            <person name="Arlat M."/>
            <person name="Billault A."/>
            <person name="Brottier P."/>
            <person name="Camus J.-C."/>
            <person name="Cattolico L."/>
            <person name="Chandler M."/>
            <person name="Choisne N."/>
            <person name="Claudel-Renard C."/>
            <person name="Cunnac S."/>
            <person name="Demange N."/>
            <person name="Gaspin C."/>
            <person name="Lavie M."/>
            <person name="Moisan A."/>
            <person name="Robert C."/>
            <person name="Saurin W."/>
            <person name="Schiex T."/>
            <person name="Siguier P."/>
            <person name="Thebault P."/>
            <person name="Whalen M."/>
            <person name="Wincker P."/>
            <person name="Levy M."/>
            <person name="Weissenbach J."/>
            <person name="Boucher C.A."/>
        </authorList>
    </citation>
    <scope>NUCLEOTIDE SEQUENCE [LARGE SCALE GENOMIC DNA]</scope>
    <source>
        <strain>ATCC BAA-1114 / GMI1000</strain>
    </source>
</reference>
<accession>Q8XZR3</accession>
<dbReference type="EC" id="2.8.1.12"/>
<dbReference type="EMBL" id="AL646052">
    <property type="protein sequence ID" value="CAD15034.1"/>
    <property type="molecule type" value="Genomic_DNA"/>
</dbReference>
<dbReference type="RefSeq" id="WP_011001281.1">
    <property type="nucleotide sequence ID" value="NC_003295.1"/>
</dbReference>
<dbReference type="SMR" id="Q8XZR3"/>
<dbReference type="STRING" id="267608.RSc1332"/>
<dbReference type="EnsemblBacteria" id="CAD15034">
    <property type="protein sequence ID" value="CAD15034"/>
    <property type="gene ID" value="RSc1332"/>
</dbReference>
<dbReference type="KEGG" id="rso:RSc1332"/>
<dbReference type="eggNOG" id="COG0314">
    <property type="taxonomic scope" value="Bacteria"/>
</dbReference>
<dbReference type="HOGENOM" id="CLU_089568_2_1_4"/>
<dbReference type="UniPathway" id="UPA00344"/>
<dbReference type="Proteomes" id="UP000001436">
    <property type="component" value="Chromosome"/>
</dbReference>
<dbReference type="GO" id="GO:0030366">
    <property type="term" value="F:molybdopterin synthase activity"/>
    <property type="evidence" value="ECO:0007669"/>
    <property type="project" value="UniProtKB-EC"/>
</dbReference>
<dbReference type="GO" id="GO:0006777">
    <property type="term" value="P:Mo-molybdopterin cofactor biosynthetic process"/>
    <property type="evidence" value="ECO:0007669"/>
    <property type="project" value="UniProtKB-KW"/>
</dbReference>
<dbReference type="CDD" id="cd00756">
    <property type="entry name" value="MoaE"/>
    <property type="match status" value="1"/>
</dbReference>
<dbReference type="FunFam" id="3.90.1170.40:FF:000001">
    <property type="entry name" value="Molybdopterin synthase catalytic subunit MoaE"/>
    <property type="match status" value="1"/>
</dbReference>
<dbReference type="Gene3D" id="3.90.1170.40">
    <property type="entry name" value="Molybdopterin biosynthesis MoaE subunit"/>
    <property type="match status" value="1"/>
</dbReference>
<dbReference type="InterPro" id="IPR036563">
    <property type="entry name" value="MoaE_sf"/>
</dbReference>
<dbReference type="InterPro" id="IPR003448">
    <property type="entry name" value="Mopterin_biosynth_MoaE"/>
</dbReference>
<dbReference type="PANTHER" id="PTHR23404">
    <property type="entry name" value="MOLYBDOPTERIN SYNTHASE RELATED"/>
    <property type="match status" value="1"/>
</dbReference>
<dbReference type="Pfam" id="PF02391">
    <property type="entry name" value="MoaE"/>
    <property type="match status" value="1"/>
</dbReference>
<dbReference type="SUPFAM" id="SSF54690">
    <property type="entry name" value="Molybdopterin synthase subunit MoaE"/>
    <property type="match status" value="1"/>
</dbReference>
<protein>
    <recommendedName>
        <fullName>Molybdopterin synthase catalytic subunit</fullName>
        <ecNumber>2.8.1.12</ecNumber>
    </recommendedName>
    <alternativeName>
        <fullName>MPT synthase subunit 2</fullName>
    </alternativeName>
    <alternativeName>
        <fullName>Molybdenum cofactor biosynthesis protein E</fullName>
    </alternativeName>
    <alternativeName>
        <fullName>Molybdopterin-converting factor large subunit</fullName>
    </alternativeName>
    <alternativeName>
        <fullName>Molybdopterin-converting factor subunit 2</fullName>
    </alternativeName>
</protein>
<evidence type="ECO:0000250" key="1"/>
<evidence type="ECO:0000305" key="2"/>
<name>MOAE_RALN1</name>
<feature type="chain" id="PRO_0000163091" description="Molybdopterin synthase catalytic subunit">
    <location>
        <begin position="1"/>
        <end position="176"/>
    </location>
</feature>
<feature type="binding site" evidence="1">
    <location>
        <begin position="36"/>
        <end position="38"/>
    </location>
    <ligand>
        <name>substrate</name>
    </ligand>
</feature>
<feature type="binding site" evidence="1">
    <location>
        <begin position="102"/>
        <end position="103"/>
    </location>
    <ligand>
        <name>substrate</name>
    </ligand>
</feature>
<feature type="binding site" evidence="1">
    <location>
        <position position="118"/>
    </location>
    <ligand>
        <name>substrate</name>
    </ligand>
</feature>
<feature type="binding site" evidence="1">
    <location>
        <begin position="125"/>
        <end position="127"/>
    </location>
    <ligand>
        <name>substrate</name>
    </ligand>
</feature>
<keyword id="KW-0501">Molybdenum cofactor biosynthesis</keyword>
<keyword id="KW-1185">Reference proteome</keyword>
<keyword id="KW-0808">Transferase</keyword>
<organism>
    <name type="scientific">Ralstonia nicotianae (strain ATCC BAA-1114 / GMI1000)</name>
    <name type="common">Ralstonia solanacearum</name>
    <dbReference type="NCBI Taxonomy" id="267608"/>
    <lineage>
        <taxon>Bacteria</taxon>
        <taxon>Pseudomonadati</taxon>
        <taxon>Pseudomonadota</taxon>
        <taxon>Betaproteobacteria</taxon>
        <taxon>Burkholderiales</taxon>
        <taxon>Burkholderiaceae</taxon>
        <taxon>Ralstonia</taxon>
        <taxon>Ralstonia solanacearum species complex</taxon>
    </lineage>
</organism>
<proteinExistence type="inferred from homology"/>
<gene>
    <name type="primary">moaE</name>
    <name type="ordered locus">RSc1332</name>
    <name type="ORF">RS02854</name>
</gene>
<sequence>MPTIRVQEADFDLGAEIAALRAGRPQIGAVASFIGTVRDINDGSGVSEMELEHYPGMTEKALANIVDAAMQRWDLIDALVIHRVGKLRPEDQIVLVAVASGHRGEAFAACEFIMDYLKSEAPFWKKEQTAQGARWVDARVTDERALARWGIVTDNASAATAQAASANDQNQKDRDA</sequence>
<comment type="function">
    <text evidence="1">Converts molybdopterin precursor Z into molybdopterin. This requires the incorporation of two sulfur atoms into precursor Z to generate a dithiolene group. The sulfur is provided by MoaD (By similarity).</text>
</comment>
<comment type="catalytic activity">
    <reaction>
        <text>2 [molybdopterin-synthase sulfur-carrier protein]-C-terminal-Gly-aminoethanethioate + cyclic pyranopterin phosphate + H2O = molybdopterin + 2 [molybdopterin-synthase sulfur-carrier protein]-C-terminal Gly-Gly + 2 H(+)</text>
        <dbReference type="Rhea" id="RHEA:26333"/>
        <dbReference type="Rhea" id="RHEA-COMP:12202"/>
        <dbReference type="Rhea" id="RHEA-COMP:19907"/>
        <dbReference type="ChEBI" id="CHEBI:15377"/>
        <dbReference type="ChEBI" id="CHEBI:15378"/>
        <dbReference type="ChEBI" id="CHEBI:58698"/>
        <dbReference type="ChEBI" id="CHEBI:59648"/>
        <dbReference type="ChEBI" id="CHEBI:90778"/>
        <dbReference type="ChEBI" id="CHEBI:232372"/>
        <dbReference type="EC" id="2.8.1.12"/>
    </reaction>
</comment>
<comment type="pathway">
    <text>Cofactor biosynthesis; molybdopterin biosynthesis.</text>
</comment>
<comment type="subunit">
    <text evidence="1">Heterotetramer of 2 MoaD subunits and 2 MoaE subunits. Also stable as homodimer. The enzyme changes between these two forms during catalysis (By similarity).</text>
</comment>
<comment type="similarity">
    <text evidence="2">Belongs to the MoaE family.</text>
</comment>